<organism>
    <name type="scientific">Salmonella typhimurium (strain LT2 / SGSC1412 / ATCC 700720)</name>
    <dbReference type="NCBI Taxonomy" id="99287"/>
    <lineage>
        <taxon>Bacteria</taxon>
        <taxon>Pseudomonadati</taxon>
        <taxon>Pseudomonadota</taxon>
        <taxon>Gammaproteobacteria</taxon>
        <taxon>Enterobacterales</taxon>
        <taxon>Enterobacteriaceae</taxon>
        <taxon>Salmonella</taxon>
    </lineage>
</organism>
<protein>
    <recommendedName>
        <fullName evidence="1">Glutamate--tRNA ligase</fullName>
        <ecNumber evidence="1">6.1.1.17</ecNumber>
    </recommendedName>
    <alternativeName>
        <fullName evidence="1">Glutamyl-tRNA synthetase</fullName>
        <shortName evidence="1">GluRS</shortName>
    </alternativeName>
</protein>
<gene>
    <name evidence="1" type="primary">gltX</name>
    <name type="ordered locus">STM2415</name>
</gene>
<evidence type="ECO:0000255" key="1">
    <source>
        <dbReference type="HAMAP-Rule" id="MF_00022"/>
    </source>
</evidence>
<sequence>MKIKTRFAPSPTGYLHVGGARTALYSWLFARHHGGEFVLRIEDTDLERSTPEAIEAIMDGMNWLNLEWDEGPYFQTKRFDRYNAVIDEMLEAGTAYKCYCSKERLEQLREDQMAKGEKPRYDGRCRHSHEHHADDEPCVVRFANPQDGSVIFDDQIRGPIEFSNQELDDLIIRRTDGSPTYNFCVVVDDWDMEITHVIRGEDHINNTPRQINILKALNAPVPMYAHVSMINGDDGKKLSKRHGAVSVMQYRDDGYLPEALLNYLVRLGWSSGDQEIFTREEMIKLFSLGAVSKSASAFNTDKLLWLNHHYINTLAPEYVATHLQWHIEQENIDTRNGPQLAELVKLLGERCKTLKEMAQSCRYFYEDFSEFDADAAKKHLRPVARQPLEVVRDKLSAITDWSAENVHHAIQATADELEVGMGKVGMPLRVAVTGAGQSPALDVTVHAIGKTRSIERINKALGFIAERESQQ</sequence>
<reference key="1">
    <citation type="journal article" date="2001" name="Nature">
        <title>Complete genome sequence of Salmonella enterica serovar Typhimurium LT2.</title>
        <authorList>
            <person name="McClelland M."/>
            <person name="Sanderson K.E."/>
            <person name="Spieth J."/>
            <person name="Clifton S.W."/>
            <person name="Latreille P."/>
            <person name="Courtney L."/>
            <person name="Porwollik S."/>
            <person name="Ali J."/>
            <person name="Dante M."/>
            <person name="Du F."/>
            <person name="Hou S."/>
            <person name="Layman D."/>
            <person name="Leonard S."/>
            <person name="Nguyen C."/>
            <person name="Scott K."/>
            <person name="Holmes A."/>
            <person name="Grewal N."/>
            <person name="Mulvaney E."/>
            <person name="Ryan E."/>
            <person name="Sun H."/>
            <person name="Florea L."/>
            <person name="Miller W."/>
            <person name="Stoneking T."/>
            <person name="Nhan M."/>
            <person name="Waterston R."/>
            <person name="Wilson R.K."/>
        </authorList>
    </citation>
    <scope>NUCLEOTIDE SEQUENCE [LARGE SCALE GENOMIC DNA]</scope>
    <source>
        <strain>LT2 / SGSC1412 / ATCC 700720</strain>
    </source>
</reference>
<accession>P0A2K3</accession>
<accession>Q8Z4X1</accession>
<accession>Q8ZN97</accession>
<proteinExistence type="inferred from homology"/>
<dbReference type="EC" id="6.1.1.17" evidence="1"/>
<dbReference type="EMBL" id="AE006468">
    <property type="protein sequence ID" value="AAL21313.1"/>
    <property type="molecule type" value="Genomic_DNA"/>
</dbReference>
<dbReference type="RefSeq" id="NP_461354.1">
    <property type="nucleotide sequence ID" value="NC_003197.2"/>
</dbReference>
<dbReference type="RefSeq" id="WP_000695623.1">
    <property type="nucleotide sequence ID" value="NC_003197.2"/>
</dbReference>
<dbReference type="SMR" id="P0A2K3"/>
<dbReference type="STRING" id="99287.STM2415"/>
<dbReference type="PaxDb" id="99287-STM2415"/>
<dbReference type="GeneID" id="1253937"/>
<dbReference type="KEGG" id="stm:STM2415"/>
<dbReference type="PATRIC" id="fig|99287.12.peg.2555"/>
<dbReference type="HOGENOM" id="CLU_015768_6_0_6"/>
<dbReference type="OMA" id="HGATNVM"/>
<dbReference type="PhylomeDB" id="P0A2K3"/>
<dbReference type="BioCyc" id="SENT99287:STM2415-MONOMER"/>
<dbReference type="Proteomes" id="UP000001014">
    <property type="component" value="Chromosome"/>
</dbReference>
<dbReference type="GO" id="GO:0005829">
    <property type="term" value="C:cytosol"/>
    <property type="evidence" value="ECO:0000318"/>
    <property type="project" value="GO_Central"/>
</dbReference>
<dbReference type="GO" id="GO:0005524">
    <property type="term" value="F:ATP binding"/>
    <property type="evidence" value="ECO:0007669"/>
    <property type="project" value="UniProtKB-UniRule"/>
</dbReference>
<dbReference type="GO" id="GO:0004818">
    <property type="term" value="F:glutamate-tRNA ligase activity"/>
    <property type="evidence" value="ECO:0000318"/>
    <property type="project" value="GO_Central"/>
</dbReference>
<dbReference type="GO" id="GO:0000049">
    <property type="term" value="F:tRNA binding"/>
    <property type="evidence" value="ECO:0007669"/>
    <property type="project" value="InterPro"/>
</dbReference>
<dbReference type="GO" id="GO:0008270">
    <property type="term" value="F:zinc ion binding"/>
    <property type="evidence" value="ECO:0007669"/>
    <property type="project" value="UniProtKB-UniRule"/>
</dbReference>
<dbReference type="GO" id="GO:0006424">
    <property type="term" value="P:glutamyl-tRNA aminoacylation"/>
    <property type="evidence" value="ECO:0000318"/>
    <property type="project" value="GO_Central"/>
</dbReference>
<dbReference type="CDD" id="cd00808">
    <property type="entry name" value="GluRS_core"/>
    <property type="match status" value="1"/>
</dbReference>
<dbReference type="FunFam" id="1.10.10.350:FF:000001">
    <property type="entry name" value="Glutamate--tRNA ligase"/>
    <property type="match status" value="1"/>
</dbReference>
<dbReference type="FunFam" id="3.40.50.620:FF:000007">
    <property type="entry name" value="Glutamate--tRNA ligase"/>
    <property type="match status" value="1"/>
</dbReference>
<dbReference type="Gene3D" id="1.10.10.350">
    <property type="match status" value="1"/>
</dbReference>
<dbReference type="Gene3D" id="3.40.50.620">
    <property type="entry name" value="HUPs"/>
    <property type="match status" value="1"/>
</dbReference>
<dbReference type="HAMAP" id="MF_00022">
    <property type="entry name" value="Glu_tRNA_synth_type1"/>
    <property type="match status" value="1"/>
</dbReference>
<dbReference type="InterPro" id="IPR045462">
    <property type="entry name" value="aa-tRNA-synth_I_cd-bd"/>
</dbReference>
<dbReference type="InterPro" id="IPR020751">
    <property type="entry name" value="aa-tRNA-synth_I_codon-bd_sub2"/>
</dbReference>
<dbReference type="InterPro" id="IPR001412">
    <property type="entry name" value="aa-tRNA-synth_I_CS"/>
</dbReference>
<dbReference type="InterPro" id="IPR008925">
    <property type="entry name" value="aa_tRNA-synth_I_cd-bd_sf"/>
</dbReference>
<dbReference type="InterPro" id="IPR004527">
    <property type="entry name" value="Glu-tRNA-ligase_bac/mito"/>
</dbReference>
<dbReference type="InterPro" id="IPR000924">
    <property type="entry name" value="Glu/Gln-tRNA-synth"/>
</dbReference>
<dbReference type="InterPro" id="IPR020058">
    <property type="entry name" value="Glu/Gln-tRNA-synth_Ib_cat-dom"/>
</dbReference>
<dbReference type="InterPro" id="IPR049940">
    <property type="entry name" value="GluQ/Sye"/>
</dbReference>
<dbReference type="InterPro" id="IPR033910">
    <property type="entry name" value="GluRS_core"/>
</dbReference>
<dbReference type="InterPro" id="IPR014729">
    <property type="entry name" value="Rossmann-like_a/b/a_fold"/>
</dbReference>
<dbReference type="NCBIfam" id="TIGR00464">
    <property type="entry name" value="gltX_bact"/>
    <property type="match status" value="1"/>
</dbReference>
<dbReference type="PANTHER" id="PTHR43311">
    <property type="entry name" value="GLUTAMATE--TRNA LIGASE"/>
    <property type="match status" value="1"/>
</dbReference>
<dbReference type="PANTHER" id="PTHR43311:SF2">
    <property type="entry name" value="GLUTAMATE--TRNA LIGASE, MITOCHONDRIAL-RELATED"/>
    <property type="match status" value="1"/>
</dbReference>
<dbReference type="Pfam" id="PF19269">
    <property type="entry name" value="Anticodon_2"/>
    <property type="match status" value="1"/>
</dbReference>
<dbReference type="Pfam" id="PF00749">
    <property type="entry name" value="tRNA-synt_1c"/>
    <property type="match status" value="1"/>
</dbReference>
<dbReference type="PRINTS" id="PR00987">
    <property type="entry name" value="TRNASYNTHGLU"/>
</dbReference>
<dbReference type="SUPFAM" id="SSF48163">
    <property type="entry name" value="An anticodon-binding domain of class I aminoacyl-tRNA synthetases"/>
    <property type="match status" value="1"/>
</dbReference>
<dbReference type="SUPFAM" id="SSF52374">
    <property type="entry name" value="Nucleotidylyl transferase"/>
    <property type="match status" value="1"/>
</dbReference>
<dbReference type="PROSITE" id="PS00178">
    <property type="entry name" value="AA_TRNA_LIGASE_I"/>
    <property type="match status" value="1"/>
</dbReference>
<keyword id="KW-0030">Aminoacyl-tRNA synthetase</keyword>
<keyword id="KW-0067">ATP-binding</keyword>
<keyword id="KW-0963">Cytoplasm</keyword>
<keyword id="KW-0436">Ligase</keyword>
<keyword id="KW-0479">Metal-binding</keyword>
<keyword id="KW-0547">Nucleotide-binding</keyword>
<keyword id="KW-0648">Protein biosynthesis</keyword>
<keyword id="KW-1185">Reference proteome</keyword>
<keyword id="KW-0862">Zinc</keyword>
<name>SYE_SALTY</name>
<comment type="function">
    <text evidence="1">Catalyzes the attachment of glutamate to tRNA(Glu) in a two-step reaction: glutamate is first activated by ATP to form Glu-AMP and then transferred to the acceptor end of tRNA(Glu).</text>
</comment>
<comment type="catalytic activity">
    <reaction evidence="1">
        <text>tRNA(Glu) + L-glutamate + ATP = L-glutamyl-tRNA(Glu) + AMP + diphosphate</text>
        <dbReference type="Rhea" id="RHEA:23540"/>
        <dbReference type="Rhea" id="RHEA-COMP:9663"/>
        <dbReference type="Rhea" id="RHEA-COMP:9680"/>
        <dbReference type="ChEBI" id="CHEBI:29985"/>
        <dbReference type="ChEBI" id="CHEBI:30616"/>
        <dbReference type="ChEBI" id="CHEBI:33019"/>
        <dbReference type="ChEBI" id="CHEBI:78442"/>
        <dbReference type="ChEBI" id="CHEBI:78520"/>
        <dbReference type="ChEBI" id="CHEBI:456215"/>
        <dbReference type="EC" id="6.1.1.17"/>
    </reaction>
</comment>
<comment type="cofactor">
    <cofactor evidence="1">
        <name>Zn(2+)</name>
        <dbReference type="ChEBI" id="CHEBI:29105"/>
    </cofactor>
    <text evidence="1">Binds 1 zinc ion per subunit.</text>
</comment>
<comment type="subunit">
    <text evidence="1">Monomer.</text>
</comment>
<comment type="subcellular location">
    <subcellularLocation>
        <location evidence="1">Cytoplasm</location>
    </subcellularLocation>
</comment>
<comment type="similarity">
    <text evidence="1">Belongs to the class-I aminoacyl-tRNA synthetase family. Glutamate--tRNA ligase type 1 subfamily.</text>
</comment>
<feature type="chain" id="PRO_0000119647" description="Glutamate--tRNA ligase">
    <location>
        <begin position="1"/>
        <end position="471"/>
    </location>
</feature>
<feature type="short sequence motif" description="'HIGH' region" evidence="1">
    <location>
        <begin position="9"/>
        <end position="19"/>
    </location>
</feature>
<feature type="short sequence motif" description="'KMSKS' region" evidence="1">
    <location>
        <begin position="237"/>
        <end position="241"/>
    </location>
</feature>
<feature type="binding site" evidence="1">
    <location>
        <position position="98"/>
    </location>
    <ligand>
        <name>Zn(2+)</name>
        <dbReference type="ChEBI" id="CHEBI:29105"/>
    </ligand>
</feature>
<feature type="binding site" evidence="1">
    <location>
        <position position="100"/>
    </location>
    <ligand>
        <name>Zn(2+)</name>
        <dbReference type="ChEBI" id="CHEBI:29105"/>
    </ligand>
</feature>
<feature type="binding site" evidence="1">
    <location>
        <position position="125"/>
    </location>
    <ligand>
        <name>Zn(2+)</name>
        <dbReference type="ChEBI" id="CHEBI:29105"/>
    </ligand>
</feature>
<feature type="binding site" evidence="1">
    <location>
        <position position="127"/>
    </location>
    <ligand>
        <name>Zn(2+)</name>
        <dbReference type="ChEBI" id="CHEBI:29105"/>
    </ligand>
</feature>
<feature type="binding site" evidence="1">
    <location>
        <position position="240"/>
    </location>
    <ligand>
        <name>ATP</name>
        <dbReference type="ChEBI" id="CHEBI:30616"/>
    </ligand>
</feature>